<keyword id="KW-1003">Cell membrane</keyword>
<keyword id="KW-0444">Lipid biosynthesis</keyword>
<keyword id="KW-0443">Lipid metabolism</keyword>
<keyword id="KW-0472">Membrane</keyword>
<keyword id="KW-0594">Phospholipid biosynthesis</keyword>
<keyword id="KW-1208">Phospholipid metabolism</keyword>
<keyword id="KW-1185">Reference proteome</keyword>
<keyword id="KW-0808">Transferase</keyword>
<keyword id="KW-0812">Transmembrane</keyword>
<keyword id="KW-1133">Transmembrane helix</keyword>
<comment type="function">
    <text evidence="1">Catalyzes the transfer of an acyl group from acyl-phosphate (acyl-PO(4)) to glycerol-3-phosphate (G3P) to form lysophosphatidic acid (LPA). This enzyme utilizes acyl-phosphate as fatty acyl donor, but not acyl-CoA or acyl-ACP.</text>
</comment>
<comment type="catalytic activity">
    <reaction evidence="1">
        <text>an acyl phosphate + sn-glycerol 3-phosphate = a 1-acyl-sn-glycero-3-phosphate + phosphate</text>
        <dbReference type="Rhea" id="RHEA:34075"/>
        <dbReference type="ChEBI" id="CHEBI:43474"/>
        <dbReference type="ChEBI" id="CHEBI:57597"/>
        <dbReference type="ChEBI" id="CHEBI:57970"/>
        <dbReference type="ChEBI" id="CHEBI:59918"/>
        <dbReference type="EC" id="2.3.1.275"/>
    </reaction>
</comment>
<comment type="pathway">
    <text evidence="1">Lipid metabolism; phospholipid metabolism.</text>
</comment>
<comment type="subunit">
    <text evidence="1">Probably interacts with PlsX.</text>
</comment>
<comment type="subcellular location">
    <subcellularLocation>
        <location evidence="1">Cell membrane</location>
        <topology evidence="1">Multi-pass membrane protein</topology>
    </subcellularLocation>
</comment>
<comment type="similarity">
    <text evidence="1">Belongs to the PlsY family.</text>
</comment>
<gene>
    <name evidence="1" type="primary">plsY</name>
    <name type="ordered locus">SPD_0745</name>
</gene>
<protein>
    <recommendedName>
        <fullName evidence="1">Glycerol-3-phosphate acyltransferase</fullName>
    </recommendedName>
    <alternativeName>
        <fullName evidence="1">Acyl-PO4 G3P acyltransferase</fullName>
    </alternativeName>
    <alternativeName>
        <fullName evidence="1">Acyl-phosphate--glycerol-3-phosphate acyltransferase</fullName>
    </alternativeName>
    <alternativeName>
        <fullName evidence="1">G3P acyltransferase</fullName>
        <shortName evidence="1">GPAT</shortName>
        <ecNumber evidence="1">2.3.1.275</ecNumber>
    </alternativeName>
    <alternativeName>
        <fullName evidence="1">Lysophosphatidic acid synthase</fullName>
        <shortName evidence="1">LPA synthase</shortName>
    </alternativeName>
</protein>
<dbReference type="EC" id="2.3.1.275" evidence="1"/>
<dbReference type="EMBL" id="CP000410">
    <property type="protein sequence ID" value="ABJ53933.1"/>
    <property type="molecule type" value="Genomic_DNA"/>
</dbReference>
<dbReference type="RefSeq" id="WP_000628789.1">
    <property type="nucleotide sequence ID" value="NZ_JAMLJR010000025.1"/>
</dbReference>
<dbReference type="SMR" id="Q04L63"/>
<dbReference type="PaxDb" id="373153-SPD_0745"/>
<dbReference type="GeneID" id="45653793"/>
<dbReference type="KEGG" id="spd:SPD_0745"/>
<dbReference type="eggNOG" id="COG0344">
    <property type="taxonomic scope" value="Bacteria"/>
</dbReference>
<dbReference type="HOGENOM" id="CLU_081254_4_0_9"/>
<dbReference type="BioCyc" id="SPNE373153:G1G6V-820-MONOMER"/>
<dbReference type="UniPathway" id="UPA00085"/>
<dbReference type="Proteomes" id="UP000001452">
    <property type="component" value="Chromosome"/>
</dbReference>
<dbReference type="GO" id="GO:0005886">
    <property type="term" value="C:plasma membrane"/>
    <property type="evidence" value="ECO:0007669"/>
    <property type="project" value="UniProtKB-SubCell"/>
</dbReference>
<dbReference type="GO" id="GO:0043772">
    <property type="term" value="F:acyl-phosphate glycerol-3-phosphate acyltransferase activity"/>
    <property type="evidence" value="ECO:0007669"/>
    <property type="project" value="UniProtKB-UniRule"/>
</dbReference>
<dbReference type="GO" id="GO:0008654">
    <property type="term" value="P:phospholipid biosynthetic process"/>
    <property type="evidence" value="ECO:0007669"/>
    <property type="project" value="UniProtKB-UniRule"/>
</dbReference>
<dbReference type="HAMAP" id="MF_01043">
    <property type="entry name" value="PlsY"/>
    <property type="match status" value="1"/>
</dbReference>
<dbReference type="InterPro" id="IPR003811">
    <property type="entry name" value="G3P_acylTferase_PlsY"/>
</dbReference>
<dbReference type="NCBIfam" id="TIGR00023">
    <property type="entry name" value="glycerol-3-phosphate 1-O-acyltransferase PlsY"/>
    <property type="match status" value="1"/>
</dbReference>
<dbReference type="PANTHER" id="PTHR30309:SF0">
    <property type="entry name" value="GLYCEROL-3-PHOSPHATE ACYLTRANSFERASE-RELATED"/>
    <property type="match status" value="1"/>
</dbReference>
<dbReference type="PANTHER" id="PTHR30309">
    <property type="entry name" value="INNER MEMBRANE PROTEIN YGIH"/>
    <property type="match status" value="1"/>
</dbReference>
<dbReference type="Pfam" id="PF02660">
    <property type="entry name" value="G3P_acyltransf"/>
    <property type="match status" value="1"/>
</dbReference>
<dbReference type="SMART" id="SM01207">
    <property type="entry name" value="G3P_acyltransf"/>
    <property type="match status" value="1"/>
</dbReference>
<evidence type="ECO:0000255" key="1">
    <source>
        <dbReference type="HAMAP-Rule" id="MF_01043"/>
    </source>
</evidence>
<name>PLSY_STRP2</name>
<reference key="1">
    <citation type="journal article" date="2007" name="J. Bacteriol.">
        <title>Genome sequence of Avery's virulent serotype 2 strain D39 of Streptococcus pneumoniae and comparison with that of unencapsulated laboratory strain R6.</title>
        <authorList>
            <person name="Lanie J.A."/>
            <person name="Ng W.-L."/>
            <person name="Kazmierczak K.M."/>
            <person name="Andrzejewski T.M."/>
            <person name="Davidsen T.M."/>
            <person name="Wayne K.J."/>
            <person name="Tettelin H."/>
            <person name="Glass J.I."/>
            <person name="Winkler M.E."/>
        </authorList>
    </citation>
    <scope>NUCLEOTIDE SEQUENCE [LARGE SCALE GENOMIC DNA]</scope>
    <source>
        <strain>D39 / NCTC 7466</strain>
    </source>
</reference>
<organism>
    <name type="scientific">Streptococcus pneumoniae serotype 2 (strain D39 / NCTC 7466)</name>
    <dbReference type="NCBI Taxonomy" id="373153"/>
    <lineage>
        <taxon>Bacteria</taxon>
        <taxon>Bacillati</taxon>
        <taxon>Bacillota</taxon>
        <taxon>Bacilli</taxon>
        <taxon>Lactobacillales</taxon>
        <taxon>Streptococcaceae</taxon>
        <taxon>Streptococcus</taxon>
    </lineage>
</organism>
<accession>Q04L63</accession>
<feature type="chain" id="PRO_1000064232" description="Glycerol-3-phosphate acyltransferase">
    <location>
        <begin position="1"/>
        <end position="213"/>
    </location>
</feature>
<feature type="transmembrane region" description="Helical" evidence="1">
    <location>
        <begin position="2"/>
        <end position="22"/>
    </location>
</feature>
<feature type="transmembrane region" description="Helical" evidence="1">
    <location>
        <begin position="52"/>
        <end position="74"/>
    </location>
</feature>
<feature type="transmembrane region" description="Helical" evidence="1">
    <location>
        <begin position="81"/>
        <end position="100"/>
    </location>
</feature>
<feature type="transmembrane region" description="Helical" evidence="1">
    <location>
        <begin position="112"/>
        <end position="132"/>
    </location>
</feature>
<feature type="transmembrane region" description="Helical" evidence="1">
    <location>
        <begin position="143"/>
        <end position="163"/>
    </location>
</feature>
<feature type="transmembrane region" description="Helical" evidence="1">
    <location>
        <begin position="164"/>
        <end position="184"/>
    </location>
</feature>
<sequence>MITIVLLILAYLLGSIPSGLWIGQVFFQINLREHGSGNTGTTNTFRILGKKAGMATFVIDFFKGTLATLLPIIFHLQGVSPLIFGLLAVIGHTFPIFAGFKGGKAVATSAGVIFGFAPIFCLYLAIIFFGALYLGSMISLSSVTASIAAVIGVLLFPLFGFILSNYDSLFIAIILALASLIIIRHKDNIARIKNKTENLVPWGLNLTHQDPKK</sequence>
<proteinExistence type="inferred from homology"/>